<reference key="1">
    <citation type="journal article" date="2006" name="Plant Physiol.">
        <title>Arabidopsis carboxyl-terminal domain phosphatase-like isoforms share common catalytic and interaction domains but have distinct in planta functions.</title>
        <authorList>
            <person name="Bang W."/>
            <person name="Kim S."/>
            <person name="Ueda A."/>
            <person name="Vikram M."/>
            <person name="Yun D."/>
            <person name="Bressan R.A."/>
            <person name="Hasegawa P.M."/>
            <person name="Bahk J."/>
            <person name="Koiwa H."/>
        </authorList>
    </citation>
    <scope>NUCLEOTIDE SEQUENCE [MRNA]</scope>
    <scope>FUNCTION</scope>
    <scope>INTERACTION WITH RAP74</scope>
    <scope>INDUCTION BY NACL</scope>
    <scope>BRCT DOMAIN</scope>
    <scope>SUBCELLULAR LOCATION</scope>
    <source>
        <strain>cv. Columbia</strain>
    </source>
</reference>
<reference key="2">
    <citation type="journal article" date="1998" name="DNA Res.">
        <title>Structural analysis of Arabidopsis thaliana chromosome 5. VI. Sequence features of the regions of 1,367,185 bp covered by 19 physically assigned P1 and TAC clones.</title>
        <authorList>
            <person name="Kotani H."/>
            <person name="Nakamura Y."/>
            <person name="Sato S."/>
            <person name="Asamizu E."/>
            <person name="Kaneko T."/>
            <person name="Miyajima N."/>
            <person name="Tabata S."/>
        </authorList>
    </citation>
    <scope>NUCLEOTIDE SEQUENCE [LARGE SCALE GENOMIC DNA]</scope>
    <source>
        <strain>cv. Columbia</strain>
    </source>
</reference>
<reference key="3">
    <citation type="journal article" date="2017" name="Plant J.">
        <title>Araport11: a complete reannotation of the Arabidopsis thaliana reference genome.</title>
        <authorList>
            <person name="Cheng C.Y."/>
            <person name="Krishnakumar V."/>
            <person name="Chan A.P."/>
            <person name="Thibaud-Nissen F."/>
            <person name="Schobel S."/>
            <person name="Town C.D."/>
        </authorList>
    </citation>
    <scope>GENOME REANNOTATION</scope>
    <source>
        <strain>cv. Columbia</strain>
    </source>
</reference>
<reference key="4">
    <citation type="journal article" date="2008" name="Plant Physiol.">
        <title>Evolutionary radiation pattern of novel protein phosphatases revealed by analysis of protein data from the completely sequenced genomes of humans, green algae, and higher plants.</title>
        <authorList>
            <person name="Kerk D."/>
            <person name="Templeton G."/>
            <person name="Moorhead G.B.G."/>
        </authorList>
    </citation>
    <scope>GENE FAMILY</scope>
</reference>
<keyword id="KW-0378">Hydrolase</keyword>
<keyword id="KW-0479">Metal-binding</keyword>
<keyword id="KW-0539">Nucleus</keyword>
<keyword id="KW-1185">Reference proteome</keyword>
<keyword id="KW-0678">Repressor</keyword>
<keyword id="KW-0694">RNA-binding</keyword>
<keyword id="KW-0804">Transcription</keyword>
<keyword id="KW-0805">Transcription regulation</keyword>
<name>CPL4_ARATH</name>
<gene>
    <name type="primary">CPL4</name>
    <name type="ordered locus">At5g58003</name>
    <name type="ORF">MTI20</name>
</gene>
<protein>
    <recommendedName>
        <fullName>RNA polymerase II C-terminal domain phosphatase-like 4</fullName>
        <shortName>FCP-like 4</shortName>
        <ecNumber>3.1.3.16</ecNumber>
    </recommendedName>
    <alternativeName>
        <fullName>Carboxyl-terminal phosphatase-like 4</fullName>
        <shortName>AtCPL4</shortName>
        <shortName>CTD phosphatase-like 4</shortName>
    </alternativeName>
</protein>
<dbReference type="EC" id="3.1.3.16"/>
<dbReference type="EMBL" id="DQ503426">
    <property type="protein sequence ID" value="ABF55959.1"/>
    <property type="molecule type" value="mRNA"/>
</dbReference>
<dbReference type="EMBL" id="AB013396">
    <property type="protein sequence ID" value="BAB08870.1"/>
    <property type="status" value="ALT_SEQ"/>
    <property type="molecule type" value="Genomic_DNA"/>
</dbReference>
<dbReference type="EMBL" id="CP002688">
    <property type="protein sequence ID" value="AED96984.1"/>
    <property type="molecule type" value="Genomic_DNA"/>
</dbReference>
<dbReference type="RefSeq" id="NP_001078764.1">
    <property type="nucleotide sequence ID" value="NM_001085295.2"/>
</dbReference>
<dbReference type="SMR" id="Q00IB6"/>
<dbReference type="BioGRID" id="624522">
    <property type="interactions" value="4"/>
</dbReference>
<dbReference type="FunCoup" id="Q00IB6">
    <property type="interactions" value="2997"/>
</dbReference>
<dbReference type="STRING" id="3702.Q00IB6"/>
<dbReference type="iPTMnet" id="Q00IB6"/>
<dbReference type="PaxDb" id="3702-AT5G58003.1"/>
<dbReference type="ProteomicsDB" id="220487"/>
<dbReference type="EnsemblPlants" id="AT5G58003.1">
    <property type="protein sequence ID" value="AT5G58003.1"/>
    <property type="gene ID" value="AT5G58003"/>
</dbReference>
<dbReference type="GeneID" id="5008312"/>
<dbReference type="Gramene" id="AT5G58003.1">
    <property type="protein sequence ID" value="AT5G58003.1"/>
    <property type="gene ID" value="AT5G58003"/>
</dbReference>
<dbReference type="KEGG" id="ath:AT5G58003"/>
<dbReference type="Araport" id="AT5G58003"/>
<dbReference type="TAIR" id="AT5G58003">
    <property type="gene designation" value="CPL4"/>
</dbReference>
<dbReference type="eggNOG" id="KOG0323">
    <property type="taxonomic scope" value="Eukaryota"/>
</dbReference>
<dbReference type="HOGENOM" id="CLU_023960_1_0_1"/>
<dbReference type="InParanoid" id="Q00IB6"/>
<dbReference type="OrthoDB" id="10249888at2759"/>
<dbReference type="PhylomeDB" id="Q00IB6"/>
<dbReference type="PRO" id="PR:Q00IB6"/>
<dbReference type="Proteomes" id="UP000006548">
    <property type="component" value="Chromosome 5"/>
</dbReference>
<dbReference type="ExpressionAtlas" id="Q00IB6">
    <property type="expression patterns" value="baseline and differential"/>
</dbReference>
<dbReference type="GO" id="GO:0005634">
    <property type="term" value="C:nucleus"/>
    <property type="evidence" value="ECO:0000314"/>
    <property type="project" value="TAIR"/>
</dbReference>
<dbReference type="GO" id="GO:0046872">
    <property type="term" value="F:metal ion binding"/>
    <property type="evidence" value="ECO:0007669"/>
    <property type="project" value="UniProtKB-KW"/>
</dbReference>
<dbReference type="GO" id="GO:0003723">
    <property type="term" value="F:RNA binding"/>
    <property type="evidence" value="ECO:0007669"/>
    <property type="project" value="UniProtKB-KW"/>
</dbReference>
<dbReference type="GO" id="GO:0008420">
    <property type="term" value="F:RNA polymerase II CTD heptapeptide repeat phosphatase activity"/>
    <property type="evidence" value="ECO:0007669"/>
    <property type="project" value="InterPro"/>
</dbReference>
<dbReference type="GO" id="GO:0009651">
    <property type="term" value="P:response to salt stress"/>
    <property type="evidence" value="ECO:0000270"/>
    <property type="project" value="UniProtKB"/>
</dbReference>
<dbReference type="CDD" id="cd17729">
    <property type="entry name" value="BRCT_CTDP1"/>
    <property type="match status" value="1"/>
</dbReference>
<dbReference type="CDD" id="cd07521">
    <property type="entry name" value="HAD_FCP1-like"/>
    <property type="match status" value="1"/>
</dbReference>
<dbReference type="FunFam" id="3.40.50.10190:FF:000014">
    <property type="entry name" value="RNA polymerase II C-terminal domain phosphatase-like 3"/>
    <property type="match status" value="1"/>
</dbReference>
<dbReference type="FunFam" id="3.40.50.1000:FF:000125">
    <property type="entry name" value="RNA polymerase II C-terminal domain phosphatase-like 4"/>
    <property type="match status" value="1"/>
</dbReference>
<dbReference type="Gene3D" id="3.40.50.10190">
    <property type="entry name" value="BRCT domain"/>
    <property type="match status" value="1"/>
</dbReference>
<dbReference type="Gene3D" id="3.40.50.1000">
    <property type="entry name" value="HAD superfamily/HAD-like"/>
    <property type="match status" value="1"/>
</dbReference>
<dbReference type="InterPro" id="IPR001357">
    <property type="entry name" value="BRCT_dom"/>
</dbReference>
<dbReference type="InterPro" id="IPR036420">
    <property type="entry name" value="BRCT_dom_sf"/>
</dbReference>
<dbReference type="InterPro" id="IPR039189">
    <property type="entry name" value="Fcp1"/>
</dbReference>
<dbReference type="InterPro" id="IPR004274">
    <property type="entry name" value="FCP1_dom"/>
</dbReference>
<dbReference type="InterPro" id="IPR011947">
    <property type="entry name" value="FCP1_euk"/>
</dbReference>
<dbReference type="InterPro" id="IPR036412">
    <property type="entry name" value="HAD-like_sf"/>
</dbReference>
<dbReference type="InterPro" id="IPR023214">
    <property type="entry name" value="HAD_sf"/>
</dbReference>
<dbReference type="NCBIfam" id="TIGR02250">
    <property type="entry name" value="FCP1_euk"/>
    <property type="match status" value="1"/>
</dbReference>
<dbReference type="PANTHER" id="PTHR23081">
    <property type="entry name" value="RNA POLYMERASE II CTD PHOSPHATASE"/>
    <property type="match status" value="1"/>
</dbReference>
<dbReference type="PANTHER" id="PTHR23081:SF36">
    <property type="entry name" value="RNA POLYMERASE II SUBUNIT A C-TERMINAL DOMAIN PHOSPHATASE"/>
    <property type="match status" value="1"/>
</dbReference>
<dbReference type="Pfam" id="PF00533">
    <property type="entry name" value="BRCT"/>
    <property type="match status" value="1"/>
</dbReference>
<dbReference type="Pfam" id="PF03031">
    <property type="entry name" value="NIF"/>
    <property type="match status" value="1"/>
</dbReference>
<dbReference type="SMART" id="SM00292">
    <property type="entry name" value="BRCT"/>
    <property type="match status" value="1"/>
</dbReference>
<dbReference type="SMART" id="SM00577">
    <property type="entry name" value="CPDc"/>
    <property type="match status" value="1"/>
</dbReference>
<dbReference type="SUPFAM" id="SSF52113">
    <property type="entry name" value="BRCT domain"/>
    <property type="match status" value="1"/>
</dbReference>
<dbReference type="SUPFAM" id="SSF56784">
    <property type="entry name" value="HAD-like"/>
    <property type="match status" value="1"/>
</dbReference>
<dbReference type="PROSITE" id="PS50172">
    <property type="entry name" value="BRCT"/>
    <property type="match status" value="1"/>
</dbReference>
<dbReference type="PROSITE" id="PS50969">
    <property type="entry name" value="FCP1"/>
    <property type="match status" value="1"/>
</dbReference>
<comment type="function">
    <text evidence="1 5">Processively dephosphorylates 'Ser-2' and/or 'Ser-5' of the heptad repeats YSPTSPS in the C-terminal domain of the largest RNA polymerase II subunit (RPB1). This promotes the activity of RNA polymerase II (By similarity). Required for normal plant growth.</text>
</comment>
<comment type="catalytic activity">
    <reaction>
        <text>O-phospho-L-seryl-[protein] + H2O = L-seryl-[protein] + phosphate</text>
        <dbReference type="Rhea" id="RHEA:20629"/>
        <dbReference type="Rhea" id="RHEA-COMP:9863"/>
        <dbReference type="Rhea" id="RHEA-COMP:11604"/>
        <dbReference type="ChEBI" id="CHEBI:15377"/>
        <dbReference type="ChEBI" id="CHEBI:29999"/>
        <dbReference type="ChEBI" id="CHEBI:43474"/>
        <dbReference type="ChEBI" id="CHEBI:83421"/>
        <dbReference type="EC" id="3.1.3.16"/>
    </reaction>
</comment>
<comment type="catalytic activity">
    <reaction>
        <text>O-phospho-L-threonyl-[protein] + H2O = L-threonyl-[protein] + phosphate</text>
        <dbReference type="Rhea" id="RHEA:47004"/>
        <dbReference type="Rhea" id="RHEA-COMP:11060"/>
        <dbReference type="Rhea" id="RHEA-COMP:11605"/>
        <dbReference type="ChEBI" id="CHEBI:15377"/>
        <dbReference type="ChEBI" id="CHEBI:30013"/>
        <dbReference type="ChEBI" id="CHEBI:43474"/>
        <dbReference type="ChEBI" id="CHEBI:61977"/>
        <dbReference type="EC" id="3.1.3.16"/>
    </reaction>
</comment>
<comment type="cofactor">
    <cofactor evidence="1">
        <name>Mg(2+)</name>
        <dbReference type="ChEBI" id="CHEBI:18420"/>
    </cofactor>
    <cofactor evidence="1">
        <name>Co(2+)</name>
        <dbReference type="ChEBI" id="CHEBI:48828"/>
    </cofactor>
    <cofactor evidence="1">
        <name>Mn(2+)</name>
        <dbReference type="ChEBI" id="CHEBI:29035"/>
    </cofactor>
    <text evidence="1">Binds Mg(2+), Co(2+) or Mn(2+).</text>
</comment>
<comment type="subunit">
    <text evidence="5">Interacts with RAP74.</text>
</comment>
<comment type="subcellular location">
    <subcellularLocation>
        <location evidence="5">Nucleus</location>
    </subcellularLocation>
</comment>
<comment type="induction">
    <text evidence="5">By NaCl.</text>
</comment>
<comment type="domain">
    <text>The BRCT domain is required for interaction with RAP74.</text>
</comment>
<comment type="sequence caution" evidence="6">
    <conflict type="erroneous gene model prediction">
        <sequence resource="EMBL-CDS" id="BAB08870"/>
    </conflict>
    <text>The predicted gene has been split into 2 genes: At5g58000 and At5g58003.</text>
</comment>
<organism>
    <name type="scientific">Arabidopsis thaliana</name>
    <name type="common">Mouse-ear cress</name>
    <dbReference type="NCBI Taxonomy" id="3702"/>
    <lineage>
        <taxon>Eukaryota</taxon>
        <taxon>Viridiplantae</taxon>
        <taxon>Streptophyta</taxon>
        <taxon>Embryophyta</taxon>
        <taxon>Tracheophyta</taxon>
        <taxon>Spermatophyta</taxon>
        <taxon>Magnoliopsida</taxon>
        <taxon>eudicotyledons</taxon>
        <taxon>Gunneridae</taxon>
        <taxon>Pentapetalae</taxon>
        <taxon>rosids</taxon>
        <taxon>malvids</taxon>
        <taxon>Brassicales</taxon>
        <taxon>Brassicaceae</taxon>
        <taxon>Camelineae</taxon>
        <taxon>Arabidopsis</taxon>
    </lineage>
</organism>
<evidence type="ECO:0000250" key="1"/>
<evidence type="ECO:0000255" key="2">
    <source>
        <dbReference type="PROSITE-ProRule" id="PRU00033"/>
    </source>
</evidence>
<evidence type="ECO:0000255" key="3">
    <source>
        <dbReference type="PROSITE-ProRule" id="PRU00336"/>
    </source>
</evidence>
<evidence type="ECO:0000256" key="4">
    <source>
        <dbReference type="SAM" id="MobiDB-lite"/>
    </source>
</evidence>
<evidence type="ECO:0000269" key="5">
    <source>
    </source>
</evidence>
<evidence type="ECO:0000305" key="6"/>
<feature type="chain" id="PRO_0000376086" description="RNA polymerase II C-terminal domain phosphatase-like 4">
    <location>
        <begin position="1"/>
        <end position="440"/>
    </location>
</feature>
<feature type="domain" description="FCP1 homology" evidence="3">
    <location>
        <begin position="118"/>
        <end position="292"/>
    </location>
</feature>
<feature type="domain" description="BRCT" evidence="2">
    <location>
        <begin position="337"/>
        <end position="429"/>
    </location>
</feature>
<feature type="region of interest" description="Disordered" evidence="4">
    <location>
        <begin position="1"/>
        <end position="49"/>
    </location>
</feature>
<feature type="compositionally biased region" description="Low complexity" evidence="4">
    <location>
        <begin position="1"/>
        <end position="36"/>
    </location>
</feature>
<feature type="compositionally biased region" description="Acidic residues" evidence="4">
    <location>
        <begin position="37"/>
        <end position="47"/>
    </location>
</feature>
<sequence>MSVASDSPVHSSSSSDDLAAFLDAELDSASDASSGPSEEEEAEDDVESGLKRQKLEHLEEASSSKGECEHPGSFGNMCFVCGQKLEETGVSFRYIHKEMRLNEDEISRLRDSDSRFLQRQRKLYLVLDLDHTLLNTTILRDLKPEEEYLKSHTHSLQDGCNVSGGSLFLLEFMQMMTKLRPFVHSFLKEASEMFVMYIYTMGDRNYARQMAKLLDPKGEYFGDRVISRDDGTVRHEKSLDVVLGQESAVLILDDTENAWPKHKDNLIVIERYHFFSSSCRQFDHRYKSLSELKSDESEPDGALATVLKVLKQAHALFFENVDEGISNRDVRLMLKQVRKEILKGCKIVFSRVFPTKAKPEDHPLWKMAEELGATCATEVDASVTHVVAMDVGTEKARWAVREKKYVVHRGWIDAANYLWMKQPEENFGLEQLKKQLTEEE</sequence>
<proteinExistence type="evidence at protein level"/>
<accession>Q00IB6</accession>
<accession>Q9FJL6</accession>